<name>HPR3_ARATH</name>
<evidence type="ECO:0000250" key="1"/>
<evidence type="ECO:0000269" key="2">
    <source>
    </source>
</evidence>
<evidence type="ECO:0000305" key="3"/>
<evidence type="ECO:0000305" key="4">
    <source>
    </source>
</evidence>
<sequence>MAESSEPPVVLLHRPPSLTFMDEILTREFRTLITDTSSSESLPSFFPRHASSARAFVISGRLPVTDELLSHLPSLQILVCTSVGIDHIDLAACKRRGIVITNAGNAFSDDVADCAVGLLISVLRRIPAADRYVRSGNWAKFGDFQLGSKVSGKRVGIVGLGSIGSFVAKRLESFGCVISYNSRSQKQSSPYRYYSDILSLAENNDVLVLCCSLTDETHHIVNREVMELLGKDGVVINVGRGKLIDEKEMVKCLVDGVIGGAGLDVFENEPAVPQELFGLDNVVLSPHFAVATPGSLDNVAQIALANLKAFFSNRPLLSPVQLD</sequence>
<proteinExistence type="evidence at protein level"/>
<feature type="chain" id="PRO_0000419953" description="Glyoxylate/hydroxypyruvate reductase HPR3">
    <location>
        <begin position="1"/>
        <end position="323"/>
    </location>
</feature>
<feature type="active site" evidence="1">
    <location>
        <position position="240"/>
    </location>
</feature>
<feature type="active site" evidence="1">
    <location>
        <position position="269"/>
    </location>
</feature>
<feature type="active site" description="Proton donor" evidence="1">
    <location>
        <position position="287"/>
    </location>
</feature>
<feature type="binding site" evidence="1">
    <location>
        <begin position="160"/>
        <end position="163"/>
    </location>
    <ligand>
        <name>NADP(+)</name>
        <dbReference type="ChEBI" id="CHEBI:58349"/>
    </ligand>
</feature>
<feature type="binding site" evidence="1">
    <location>
        <begin position="182"/>
        <end position="184"/>
    </location>
    <ligand>
        <name>NADP(+)</name>
        <dbReference type="ChEBI" id="CHEBI:58349"/>
    </ligand>
</feature>
<feature type="binding site" evidence="1">
    <location>
        <begin position="238"/>
        <end position="240"/>
    </location>
    <ligand>
        <name>NADP(+)</name>
        <dbReference type="ChEBI" id="CHEBI:58349"/>
    </ligand>
</feature>
<feature type="binding site" evidence="1">
    <location>
        <begin position="287"/>
        <end position="289"/>
    </location>
    <ligand>
        <name>NADP(+)</name>
        <dbReference type="ChEBI" id="CHEBI:58349"/>
    </ligand>
</feature>
<organism>
    <name type="scientific">Arabidopsis thaliana</name>
    <name type="common">Mouse-ear cress</name>
    <dbReference type="NCBI Taxonomy" id="3702"/>
    <lineage>
        <taxon>Eukaryota</taxon>
        <taxon>Viridiplantae</taxon>
        <taxon>Streptophyta</taxon>
        <taxon>Embryophyta</taxon>
        <taxon>Tracheophyta</taxon>
        <taxon>Spermatophyta</taxon>
        <taxon>Magnoliopsida</taxon>
        <taxon>eudicotyledons</taxon>
        <taxon>Gunneridae</taxon>
        <taxon>Pentapetalae</taxon>
        <taxon>rosids</taxon>
        <taxon>malvids</taxon>
        <taxon>Brassicales</taxon>
        <taxon>Brassicaceae</taxon>
        <taxon>Camelineae</taxon>
        <taxon>Arabidopsis</taxon>
    </lineage>
</organism>
<comment type="function">
    <text evidence="2">Catalyzes the NADPH-dependent reduction of glyoxylate and hydroxypyruvate (HP) into glycolate and glycerate. Mostly active in the presence of NADPH and glyoxylate.</text>
</comment>
<comment type="catalytic activity">
    <reaction evidence="4">
        <text>glycolate + NADP(+) = glyoxylate + NADPH + H(+)</text>
        <dbReference type="Rhea" id="RHEA:10992"/>
        <dbReference type="ChEBI" id="CHEBI:15378"/>
        <dbReference type="ChEBI" id="CHEBI:29805"/>
        <dbReference type="ChEBI" id="CHEBI:36655"/>
        <dbReference type="ChEBI" id="CHEBI:57783"/>
        <dbReference type="ChEBI" id="CHEBI:58349"/>
        <dbReference type="EC" id="1.1.1.79"/>
    </reaction>
    <physiologicalReaction direction="right-to-left" evidence="4">
        <dbReference type="Rhea" id="RHEA:10994"/>
    </physiologicalReaction>
</comment>
<comment type="catalytic activity">
    <reaction evidence="4">
        <text>(R)-glycerate + NADP(+) = 3-hydroxypyruvate + NADPH + H(+)</text>
        <dbReference type="Rhea" id="RHEA:18657"/>
        <dbReference type="ChEBI" id="CHEBI:15378"/>
        <dbReference type="ChEBI" id="CHEBI:16659"/>
        <dbReference type="ChEBI" id="CHEBI:17180"/>
        <dbReference type="ChEBI" id="CHEBI:57783"/>
        <dbReference type="ChEBI" id="CHEBI:58349"/>
        <dbReference type="EC" id="1.1.1.81"/>
    </reaction>
    <physiologicalReaction direction="right-to-left" evidence="4">
        <dbReference type="Rhea" id="RHEA:18659"/>
    </physiologicalReaction>
</comment>
<comment type="activity regulation">
    <text evidence="2">Inhibited by oxalate.</text>
</comment>
<comment type="subunit">
    <text evidence="1">Homodimer.</text>
</comment>
<comment type="disruption phenotype">
    <text evidence="2">Disrupted photorespiratory flux leading to a slight altered leaf concentrations of the photorespiratory intermediates hydroxypyruvate (HP), glycerate, and glycine.</text>
</comment>
<comment type="similarity">
    <text evidence="3">Belongs to the D-isomer specific 2-hydroxyacid dehydrogenase family. GyaR subfamily.</text>
</comment>
<keyword id="KW-0323">Glycolate pathway</keyword>
<keyword id="KW-0520">NAD</keyword>
<keyword id="KW-0521">NADP</keyword>
<keyword id="KW-0560">Oxidoreductase</keyword>
<keyword id="KW-0601">Photorespiration</keyword>
<keyword id="KW-0670">Pyruvate</keyword>
<keyword id="KW-1185">Reference proteome</keyword>
<reference key="1">
    <citation type="journal article" date="2000" name="Nature">
        <title>Sequence and analysis of chromosome 1 of the plant Arabidopsis thaliana.</title>
        <authorList>
            <person name="Theologis A."/>
            <person name="Ecker J.R."/>
            <person name="Palm C.J."/>
            <person name="Federspiel N.A."/>
            <person name="Kaul S."/>
            <person name="White O."/>
            <person name="Alonso J."/>
            <person name="Altafi H."/>
            <person name="Araujo R."/>
            <person name="Bowman C.L."/>
            <person name="Brooks S.Y."/>
            <person name="Buehler E."/>
            <person name="Chan A."/>
            <person name="Chao Q."/>
            <person name="Chen H."/>
            <person name="Cheuk R.F."/>
            <person name="Chin C.W."/>
            <person name="Chung M.K."/>
            <person name="Conn L."/>
            <person name="Conway A.B."/>
            <person name="Conway A.R."/>
            <person name="Creasy T.H."/>
            <person name="Dewar K."/>
            <person name="Dunn P."/>
            <person name="Etgu P."/>
            <person name="Feldblyum T.V."/>
            <person name="Feng J.-D."/>
            <person name="Fong B."/>
            <person name="Fujii C.Y."/>
            <person name="Gill J.E."/>
            <person name="Goldsmith A.D."/>
            <person name="Haas B."/>
            <person name="Hansen N.F."/>
            <person name="Hughes B."/>
            <person name="Huizar L."/>
            <person name="Hunter J.L."/>
            <person name="Jenkins J."/>
            <person name="Johnson-Hopson C."/>
            <person name="Khan S."/>
            <person name="Khaykin E."/>
            <person name="Kim C.J."/>
            <person name="Koo H.L."/>
            <person name="Kremenetskaia I."/>
            <person name="Kurtz D.B."/>
            <person name="Kwan A."/>
            <person name="Lam B."/>
            <person name="Langin-Hooper S."/>
            <person name="Lee A."/>
            <person name="Lee J.M."/>
            <person name="Lenz C.A."/>
            <person name="Li J.H."/>
            <person name="Li Y.-P."/>
            <person name="Lin X."/>
            <person name="Liu S.X."/>
            <person name="Liu Z.A."/>
            <person name="Luros J.S."/>
            <person name="Maiti R."/>
            <person name="Marziali A."/>
            <person name="Militscher J."/>
            <person name="Miranda M."/>
            <person name="Nguyen M."/>
            <person name="Nierman W.C."/>
            <person name="Osborne B.I."/>
            <person name="Pai G."/>
            <person name="Peterson J."/>
            <person name="Pham P.K."/>
            <person name="Rizzo M."/>
            <person name="Rooney T."/>
            <person name="Rowley D."/>
            <person name="Sakano H."/>
            <person name="Salzberg S.L."/>
            <person name="Schwartz J.R."/>
            <person name="Shinn P."/>
            <person name="Southwick A.M."/>
            <person name="Sun H."/>
            <person name="Tallon L.J."/>
            <person name="Tambunga G."/>
            <person name="Toriumi M.J."/>
            <person name="Town C.D."/>
            <person name="Utterback T."/>
            <person name="Van Aken S."/>
            <person name="Vaysberg M."/>
            <person name="Vysotskaia V.S."/>
            <person name="Walker M."/>
            <person name="Wu D."/>
            <person name="Yu G."/>
            <person name="Fraser C.M."/>
            <person name="Venter J.C."/>
            <person name="Davis R.W."/>
        </authorList>
    </citation>
    <scope>NUCLEOTIDE SEQUENCE [LARGE SCALE GENOMIC DNA]</scope>
    <source>
        <strain>cv. Columbia</strain>
    </source>
</reference>
<reference key="2">
    <citation type="journal article" date="2017" name="Plant J.">
        <title>Araport11: a complete reannotation of the Arabidopsis thaliana reference genome.</title>
        <authorList>
            <person name="Cheng C.Y."/>
            <person name="Krishnakumar V."/>
            <person name="Chan A.P."/>
            <person name="Thibaud-Nissen F."/>
            <person name="Schobel S."/>
            <person name="Town C.D."/>
        </authorList>
    </citation>
    <scope>GENOME REANNOTATION</scope>
    <source>
        <strain>cv. Columbia</strain>
    </source>
</reference>
<reference key="3">
    <citation type="submission" date="2004-03" db="EMBL/GenBank/DDBJ databases">
        <title>Arabidopsis ORF clones.</title>
        <authorList>
            <person name="Cheuk R.F."/>
            <person name="Chen H."/>
            <person name="Kim C.J."/>
            <person name="Shinn P."/>
            <person name="Carninci P."/>
            <person name="Hayashizaki Y."/>
            <person name="Ishida J."/>
            <person name="Kamiya A."/>
            <person name="Kawai J."/>
            <person name="Narusaka M."/>
            <person name="Sakurai T."/>
            <person name="Satou M."/>
            <person name="Seki M."/>
            <person name="Shinozaki K."/>
            <person name="Ecker J.R."/>
        </authorList>
    </citation>
    <scope>NUCLEOTIDE SEQUENCE [LARGE SCALE MRNA]</scope>
    <source>
        <strain>cv. Columbia</strain>
    </source>
</reference>
<reference key="4">
    <citation type="submission" date="2005-03" db="EMBL/GenBank/DDBJ databases">
        <title>Large-scale analysis of RIKEN Arabidopsis full-length (RAFL) cDNAs.</title>
        <authorList>
            <person name="Totoki Y."/>
            <person name="Seki M."/>
            <person name="Ishida J."/>
            <person name="Nakajima M."/>
            <person name="Enju A."/>
            <person name="Kamiya A."/>
            <person name="Narusaka M."/>
            <person name="Shin-i T."/>
            <person name="Nakagawa M."/>
            <person name="Sakamoto N."/>
            <person name="Oishi K."/>
            <person name="Kohara Y."/>
            <person name="Kobayashi M."/>
            <person name="Toyoda A."/>
            <person name="Sakaki Y."/>
            <person name="Sakurai T."/>
            <person name="Iida K."/>
            <person name="Akiyama K."/>
            <person name="Satou M."/>
            <person name="Toyoda T."/>
            <person name="Konagaya A."/>
            <person name="Carninci P."/>
            <person name="Kawai J."/>
            <person name="Hayashizaki Y."/>
            <person name="Shinozaki K."/>
        </authorList>
    </citation>
    <scope>NUCLEOTIDE SEQUENCE [LARGE SCALE MRNA]</scope>
    <source>
        <strain>cv. Columbia</strain>
    </source>
</reference>
<reference key="5">
    <citation type="journal article" date="2011" name="Plant Physiol.">
        <title>The hydroxypyruvate-reducing system in Arabidopsis: multiple enzymes for the same end.</title>
        <authorList>
            <person name="Timm S."/>
            <person name="Florian A."/>
            <person name="Jahnke K."/>
            <person name="Nunes-Nesi A."/>
            <person name="Fernie A.R."/>
            <person name="Bauwe H."/>
        </authorList>
    </citation>
    <scope>FUNCTION</scope>
    <scope>CATALYTIC ACTIVITY</scope>
    <scope>DISRUPTION PHENOTYPE</scope>
    <scope>ACTIVITY REGULATION</scope>
    <source>
        <strain>cv. Columbia</strain>
        <strain>cv. Landsberg erecta</strain>
    </source>
</reference>
<gene>
    <name type="primary">HPR3</name>
    <name type="ordered locus">At1g12550</name>
    <name type="ORF">F5O11.29</name>
    <name type="ORF">T12C24.9</name>
</gene>
<accession>Q9LE33</accession>
<protein>
    <recommendedName>
        <fullName>Glyoxylate/hydroxypyruvate reductase HPR3</fullName>
        <ecNumber evidence="4">1.1.1.79</ecNumber>
        <ecNumber evidence="4">1.1.1.81</ecNumber>
    </recommendedName>
    <alternativeName>
        <fullName>NAD(P)H-dependent hydroxypyruvate reductase 3</fullName>
        <shortName>AtHPR3</shortName>
        <shortName>HPR 3</shortName>
    </alternativeName>
</protein>
<dbReference type="EC" id="1.1.1.79" evidence="4"/>
<dbReference type="EC" id="1.1.1.81" evidence="4"/>
<dbReference type="EMBL" id="AC025416">
    <property type="protein sequence ID" value="AAF79644.1"/>
    <property type="molecule type" value="Genomic_DNA"/>
</dbReference>
<dbReference type="EMBL" id="AC025417">
    <property type="protein sequence ID" value="AAF88077.1"/>
    <property type="molecule type" value="Genomic_DNA"/>
</dbReference>
<dbReference type="EMBL" id="CP002684">
    <property type="protein sequence ID" value="AEE28896.1"/>
    <property type="molecule type" value="Genomic_DNA"/>
</dbReference>
<dbReference type="EMBL" id="BT011735">
    <property type="protein sequence ID" value="AAS49098.1"/>
    <property type="molecule type" value="mRNA"/>
</dbReference>
<dbReference type="EMBL" id="AK221605">
    <property type="protein sequence ID" value="BAD95166.1"/>
    <property type="molecule type" value="mRNA"/>
</dbReference>
<dbReference type="RefSeq" id="NP_172716.1">
    <property type="nucleotide sequence ID" value="NM_101126.3"/>
</dbReference>
<dbReference type="SMR" id="Q9LE33"/>
<dbReference type="FunCoup" id="Q9LE33">
    <property type="interactions" value="1885"/>
</dbReference>
<dbReference type="STRING" id="3702.Q9LE33"/>
<dbReference type="iPTMnet" id="Q9LE33"/>
<dbReference type="PaxDb" id="3702-AT1G12550.1"/>
<dbReference type="ProteomicsDB" id="230233"/>
<dbReference type="EnsemblPlants" id="AT1G12550.1">
    <property type="protein sequence ID" value="AT1G12550.1"/>
    <property type="gene ID" value="AT1G12550"/>
</dbReference>
<dbReference type="GeneID" id="837811"/>
<dbReference type="Gramene" id="AT1G12550.1">
    <property type="protein sequence ID" value="AT1G12550.1"/>
    <property type="gene ID" value="AT1G12550"/>
</dbReference>
<dbReference type="KEGG" id="ath:AT1G12550"/>
<dbReference type="Araport" id="AT1G12550"/>
<dbReference type="TAIR" id="AT1G12550">
    <property type="gene designation" value="HPR3"/>
</dbReference>
<dbReference type="eggNOG" id="KOG0069">
    <property type="taxonomic scope" value="Eukaryota"/>
</dbReference>
<dbReference type="HOGENOM" id="CLU_019796_1_2_1"/>
<dbReference type="InParanoid" id="Q9LE33"/>
<dbReference type="OMA" id="IAFYTNT"/>
<dbReference type="PhylomeDB" id="Q9LE33"/>
<dbReference type="BioCyc" id="ARA:AT1G12550-MONOMER"/>
<dbReference type="BioCyc" id="MetaCyc:AT1G12550-MONOMER"/>
<dbReference type="BRENDA" id="1.1.1.81">
    <property type="organism ID" value="399"/>
</dbReference>
<dbReference type="PRO" id="PR:Q9LE33"/>
<dbReference type="Proteomes" id="UP000006548">
    <property type="component" value="Chromosome 1"/>
</dbReference>
<dbReference type="ExpressionAtlas" id="Q9LE33">
    <property type="expression patterns" value="baseline and differential"/>
</dbReference>
<dbReference type="GO" id="GO:0030267">
    <property type="term" value="F:glyoxylate reductase (NADPH) activity"/>
    <property type="evidence" value="ECO:0000314"/>
    <property type="project" value="TAIR"/>
</dbReference>
<dbReference type="GO" id="GO:0120509">
    <property type="term" value="F:hydroxypyruvate reductase (NADPH) activity"/>
    <property type="evidence" value="ECO:0007669"/>
    <property type="project" value="RHEA"/>
</dbReference>
<dbReference type="GO" id="GO:0016618">
    <property type="term" value="F:hydroxypyruvate reductase [NAD(P)H] activity"/>
    <property type="evidence" value="ECO:0000314"/>
    <property type="project" value="TAIR"/>
</dbReference>
<dbReference type="GO" id="GO:0051287">
    <property type="term" value="F:NAD binding"/>
    <property type="evidence" value="ECO:0007669"/>
    <property type="project" value="InterPro"/>
</dbReference>
<dbReference type="GO" id="GO:0009854">
    <property type="term" value="P:oxidative photosynthetic carbon pathway"/>
    <property type="evidence" value="ECO:0007669"/>
    <property type="project" value="UniProtKB-KW"/>
</dbReference>
<dbReference type="GO" id="GO:0009853">
    <property type="term" value="P:photorespiration"/>
    <property type="evidence" value="ECO:0000315"/>
    <property type="project" value="TAIR"/>
</dbReference>
<dbReference type="CDD" id="cd12156">
    <property type="entry name" value="HPPR"/>
    <property type="match status" value="1"/>
</dbReference>
<dbReference type="FunFam" id="3.40.50.720:FF:000213">
    <property type="entry name" value="Putative 2-hydroxyacid dehydrogenase"/>
    <property type="match status" value="1"/>
</dbReference>
<dbReference type="Gene3D" id="3.40.50.720">
    <property type="entry name" value="NAD(P)-binding Rossmann-like Domain"/>
    <property type="match status" value="2"/>
</dbReference>
<dbReference type="InterPro" id="IPR050223">
    <property type="entry name" value="D-isomer_2-hydroxyacid_DH"/>
</dbReference>
<dbReference type="InterPro" id="IPR006139">
    <property type="entry name" value="D-isomer_2_OHA_DH_cat_dom"/>
</dbReference>
<dbReference type="InterPro" id="IPR006140">
    <property type="entry name" value="D-isomer_DH_NAD-bd"/>
</dbReference>
<dbReference type="InterPro" id="IPR036291">
    <property type="entry name" value="NAD(P)-bd_dom_sf"/>
</dbReference>
<dbReference type="PANTHER" id="PTHR10996">
    <property type="entry name" value="2-HYDROXYACID DEHYDROGENASE-RELATED"/>
    <property type="match status" value="1"/>
</dbReference>
<dbReference type="PANTHER" id="PTHR10996:SF268">
    <property type="entry name" value="GLYOXYLATE_HYDROXYPYRUVATE REDUCTASE HPR3"/>
    <property type="match status" value="1"/>
</dbReference>
<dbReference type="Pfam" id="PF00389">
    <property type="entry name" value="2-Hacid_dh"/>
    <property type="match status" value="1"/>
</dbReference>
<dbReference type="Pfam" id="PF02826">
    <property type="entry name" value="2-Hacid_dh_C"/>
    <property type="match status" value="1"/>
</dbReference>
<dbReference type="SUPFAM" id="SSF52283">
    <property type="entry name" value="Formate/glycerate dehydrogenase catalytic domain-like"/>
    <property type="match status" value="1"/>
</dbReference>
<dbReference type="SUPFAM" id="SSF51735">
    <property type="entry name" value="NAD(P)-binding Rossmann-fold domains"/>
    <property type="match status" value="1"/>
</dbReference>